<feature type="chain" id="PRO_1000131676" description="Chaperone protein HscA">
    <location>
        <begin position="1"/>
        <end position="616"/>
    </location>
</feature>
<reference key="1">
    <citation type="journal article" date="2008" name="J. Bacteriol.">
        <title>The complete genome sequence of Escherichia coli DH10B: insights into the biology of a laboratory workhorse.</title>
        <authorList>
            <person name="Durfee T."/>
            <person name="Nelson R."/>
            <person name="Baldwin S."/>
            <person name="Plunkett G. III"/>
            <person name="Burland V."/>
            <person name="Mau B."/>
            <person name="Petrosino J.F."/>
            <person name="Qin X."/>
            <person name="Muzny D.M."/>
            <person name="Ayele M."/>
            <person name="Gibbs R.A."/>
            <person name="Csorgo B."/>
            <person name="Posfai G."/>
            <person name="Weinstock G.M."/>
            <person name="Blattner F.R."/>
        </authorList>
    </citation>
    <scope>NUCLEOTIDE SEQUENCE [LARGE SCALE GENOMIC DNA]</scope>
    <source>
        <strain>K12 / DH10B</strain>
    </source>
</reference>
<proteinExistence type="inferred from homology"/>
<dbReference type="EMBL" id="CP000948">
    <property type="protein sequence ID" value="ACB03678.1"/>
    <property type="molecule type" value="Genomic_DNA"/>
</dbReference>
<dbReference type="RefSeq" id="WP_001196613.1">
    <property type="nucleotide sequence ID" value="NC_010473.1"/>
</dbReference>
<dbReference type="SMR" id="B1XB01"/>
<dbReference type="GeneID" id="93774610"/>
<dbReference type="KEGG" id="ecd:ECDH10B_2693"/>
<dbReference type="HOGENOM" id="CLU_005965_2_1_6"/>
<dbReference type="GO" id="GO:0005524">
    <property type="term" value="F:ATP binding"/>
    <property type="evidence" value="ECO:0007669"/>
    <property type="project" value="UniProtKB-KW"/>
</dbReference>
<dbReference type="GO" id="GO:0016887">
    <property type="term" value="F:ATP hydrolysis activity"/>
    <property type="evidence" value="ECO:0007669"/>
    <property type="project" value="UniProtKB-UniRule"/>
</dbReference>
<dbReference type="GO" id="GO:0140662">
    <property type="term" value="F:ATP-dependent protein folding chaperone"/>
    <property type="evidence" value="ECO:0007669"/>
    <property type="project" value="InterPro"/>
</dbReference>
<dbReference type="GO" id="GO:0051082">
    <property type="term" value="F:unfolded protein binding"/>
    <property type="evidence" value="ECO:0007669"/>
    <property type="project" value="InterPro"/>
</dbReference>
<dbReference type="GO" id="GO:0016226">
    <property type="term" value="P:iron-sulfur cluster assembly"/>
    <property type="evidence" value="ECO:0007669"/>
    <property type="project" value="InterPro"/>
</dbReference>
<dbReference type="CDD" id="cd10236">
    <property type="entry name" value="ASKHA_NBD_HSP70_HscA"/>
    <property type="match status" value="1"/>
</dbReference>
<dbReference type="FunFam" id="1.20.1270.10:FF:000006">
    <property type="entry name" value="Chaperone protein HscA"/>
    <property type="match status" value="1"/>
</dbReference>
<dbReference type="FunFam" id="3.30.420.40:FF:000046">
    <property type="entry name" value="Chaperone protein HscA"/>
    <property type="match status" value="1"/>
</dbReference>
<dbReference type="FunFam" id="3.90.640.10:FF:000013">
    <property type="entry name" value="Chaperone protein HscA"/>
    <property type="match status" value="1"/>
</dbReference>
<dbReference type="FunFam" id="2.60.34.10:FF:000005">
    <property type="entry name" value="Chaperone protein HscA homolog"/>
    <property type="match status" value="1"/>
</dbReference>
<dbReference type="FunFam" id="3.30.420.40:FF:000020">
    <property type="entry name" value="Chaperone protein HscA homolog"/>
    <property type="match status" value="1"/>
</dbReference>
<dbReference type="Gene3D" id="1.20.1270.10">
    <property type="match status" value="1"/>
</dbReference>
<dbReference type="Gene3D" id="3.30.420.40">
    <property type="match status" value="2"/>
</dbReference>
<dbReference type="Gene3D" id="3.90.640.10">
    <property type="entry name" value="Actin, Chain A, domain 4"/>
    <property type="match status" value="1"/>
</dbReference>
<dbReference type="Gene3D" id="2.60.34.10">
    <property type="entry name" value="Substrate Binding Domain Of DNAk, Chain A, domain 1"/>
    <property type="match status" value="1"/>
</dbReference>
<dbReference type="HAMAP" id="MF_00679">
    <property type="entry name" value="HscA"/>
    <property type="match status" value="1"/>
</dbReference>
<dbReference type="InterPro" id="IPR043129">
    <property type="entry name" value="ATPase_NBD"/>
</dbReference>
<dbReference type="InterPro" id="IPR018181">
    <property type="entry name" value="Heat_shock_70_CS"/>
</dbReference>
<dbReference type="InterPro" id="IPR042039">
    <property type="entry name" value="HscA_NBD"/>
</dbReference>
<dbReference type="InterPro" id="IPR029048">
    <property type="entry name" value="HSP70_C_sf"/>
</dbReference>
<dbReference type="InterPro" id="IPR029047">
    <property type="entry name" value="HSP70_peptide-bd_sf"/>
</dbReference>
<dbReference type="InterPro" id="IPR013126">
    <property type="entry name" value="Hsp_70_fam"/>
</dbReference>
<dbReference type="InterPro" id="IPR010236">
    <property type="entry name" value="ISC_FeS_clus_asmbl_HscA"/>
</dbReference>
<dbReference type="NCBIfam" id="TIGR01991">
    <property type="entry name" value="HscA"/>
    <property type="match status" value="1"/>
</dbReference>
<dbReference type="NCBIfam" id="NF003520">
    <property type="entry name" value="PRK05183.1"/>
    <property type="match status" value="1"/>
</dbReference>
<dbReference type="PANTHER" id="PTHR19375">
    <property type="entry name" value="HEAT SHOCK PROTEIN 70KDA"/>
    <property type="match status" value="1"/>
</dbReference>
<dbReference type="Pfam" id="PF00012">
    <property type="entry name" value="HSP70"/>
    <property type="match status" value="1"/>
</dbReference>
<dbReference type="PRINTS" id="PR00301">
    <property type="entry name" value="HEATSHOCK70"/>
</dbReference>
<dbReference type="SUPFAM" id="SSF53067">
    <property type="entry name" value="Actin-like ATPase domain"/>
    <property type="match status" value="2"/>
</dbReference>
<dbReference type="SUPFAM" id="SSF100934">
    <property type="entry name" value="Heat shock protein 70kD (HSP70), C-terminal subdomain"/>
    <property type="match status" value="1"/>
</dbReference>
<dbReference type="SUPFAM" id="SSF100920">
    <property type="entry name" value="Heat shock protein 70kD (HSP70), peptide-binding domain"/>
    <property type="match status" value="1"/>
</dbReference>
<dbReference type="PROSITE" id="PS00297">
    <property type="entry name" value="HSP70_1"/>
    <property type="match status" value="1"/>
</dbReference>
<dbReference type="PROSITE" id="PS00329">
    <property type="entry name" value="HSP70_2"/>
    <property type="match status" value="1"/>
</dbReference>
<dbReference type="PROSITE" id="PS01036">
    <property type="entry name" value="HSP70_3"/>
    <property type="match status" value="1"/>
</dbReference>
<gene>
    <name evidence="1" type="primary">hscA</name>
    <name type="ordered locus">ECDH10B_2693</name>
</gene>
<protein>
    <recommendedName>
        <fullName evidence="1">Chaperone protein HscA</fullName>
    </recommendedName>
    <alternativeName>
        <fullName evidence="1">Hsc66</fullName>
    </alternativeName>
</protein>
<sequence>MALLQISEPGLSAAPHQRRLAAGIDLGTTNSLVATVRSGQAETLADHEGRHLLPSVVHYQQQGHSVGYDARTNAALDTANTISSVKRLMGRSLADIQQRYPHLPYQFQASENGLPMIETAAGLLNPVRVSADILKALAARATEALAGELDGVVITVPAYFDDAQRQGTKDAARLAGLHVLRLLNEPTAAAIAYGLDSGQEGVIAVYDLGGGTFDISILRLSRGVFEVLATGGDSALGGDDFDHLLADYIREQAGIPDRSDNRVQRELLDAAIAAKIALSDADSVTVNVAGWQGEISREQFNELIAPLVKRTLLACRRALKDAGVEADEVLEVVMVGGSTRVPLVRERVGEFFGRPPLTSIDPDKVVAIGAAIQADILVGNKPDSEMLLLDVIPLSLGLETMGGLVEKVIPRNTTIPVARAQDFTTFKDGQTAMSIHVMQGERELVQDCRSLARFALRGIPALPAGGAHIRVTFQVDADGLLSVTAMEKSTGVEASIQVKPSYGLTDSEIASMIKDSMSYAEQDVKARMLAEQKVEAARVLESLHGALAADAALLSAAERQVIDDAAAHLSEVAQGDDVDAIEQAIKNVDKQTQDFAARRMDQSVRRALKGHSVDEV</sequence>
<comment type="function">
    <text evidence="1">Chaperone involved in the maturation of iron-sulfur cluster-containing proteins. Has a low intrinsic ATPase activity which is markedly stimulated by HscB. Involved in the maturation of IscU.</text>
</comment>
<comment type="similarity">
    <text evidence="1">Belongs to the heat shock protein 70 family.</text>
</comment>
<name>HSCA_ECODH</name>
<organism>
    <name type="scientific">Escherichia coli (strain K12 / DH10B)</name>
    <dbReference type="NCBI Taxonomy" id="316385"/>
    <lineage>
        <taxon>Bacteria</taxon>
        <taxon>Pseudomonadati</taxon>
        <taxon>Pseudomonadota</taxon>
        <taxon>Gammaproteobacteria</taxon>
        <taxon>Enterobacterales</taxon>
        <taxon>Enterobacteriaceae</taxon>
        <taxon>Escherichia</taxon>
    </lineage>
</organism>
<accession>B1XB01</accession>
<evidence type="ECO:0000255" key="1">
    <source>
        <dbReference type="HAMAP-Rule" id="MF_00679"/>
    </source>
</evidence>
<keyword id="KW-0067">ATP-binding</keyword>
<keyword id="KW-0143">Chaperone</keyword>
<keyword id="KW-0547">Nucleotide-binding</keyword>